<comment type="function">
    <text>Catalyzes the synthesis of activated sulfate.</text>
</comment>
<comment type="catalytic activity">
    <reaction>
        <text>adenosine 5'-phosphosulfate + ATP = 3'-phosphoadenylyl sulfate + ADP + H(+)</text>
        <dbReference type="Rhea" id="RHEA:24152"/>
        <dbReference type="ChEBI" id="CHEBI:15378"/>
        <dbReference type="ChEBI" id="CHEBI:30616"/>
        <dbReference type="ChEBI" id="CHEBI:58243"/>
        <dbReference type="ChEBI" id="CHEBI:58339"/>
        <dbReference type="ChEBI" id="CHEBI:456216"/>
        <dbReference type="EC" id="2.7.1.25"/>
    </reaction>
</comment>
<comment type="pathway">
    <text>Sulfur metabolism; hydrogen sulfide biosynthesis; sulfite from sulfate: step 2/3.</text>
</comment>
<comment type="interaction">
    <interactant intactId="EBI-9485">
        <id>Q02196</id>
    </interactant>
    <interactant intactId="EBI-4192">
        <id>Q00684</id>
        <label>CDC14</label>
    </interactant>
    <organismsDiffer>false</organismsDiffer>
    <experiments>2</experiments>
</comment>
<comment type="miscellaneous">
    <text evidence="2">Present with 2170 molecules/cell in log phase SD medium.</text>
</comment>
<comment type="similarity">
    <text evidence="3">Belongs to the APS kinase family.</text>
</comment>
<dbReference type="EC" id="2.7.1.25"/>
<dbReference type="EMBL" id="X57990">
    <property type="protein sequence ID" value="CAA41055.1"/>
    <property type="molecule type" value="Genomic_DNA"/>
</dbReference>
<dbReference type="EMBL" id="S55315">
    <property type="protein sequence ID" value="AAB19854.1"/>
    <property type="molecule type" value="Genomic_DNA"/>
</dbReference>
<dbReference type="EMBL" id="X65124">
    <property type="protein sequence ID" value="CAA46252.1"/>
    <property type="molecule type" value="Genomic_DNA"/>
</dbReference>
<dbReference type="EMBL" id="Z28001">
    <property type="protein sequence ID" value="CAA81833.1"/>
    <property type="molecule type" value="Genomic_DNA"/>
</dbReference>
<dbReference type="EMBL" id="AY558261">
    <property type="protein sequence ID" value="AAS56587.1"/>
    <property type="molecule type" value="Genomic_DNA"/>
</dbReference>
<dbReference type="EMBL" id="BK006944">
    <property type="protein sequence ID" value="DAA09156.1"/>
    <property type="molecule type" value="Genomic_DNA"/>
</dbReference>
<dbReference type="PIR" id="S17244">
    <property type="entry name" value="S17244"/>
</dbReference>
<dbReference type="RefSeq" id="NP_012925.3">
    <property type="nucleotide sequence ID" value="NM_001179567.3"/>
</dbReference>
<dbReference type="SMR" id="Q02196"/>
<dbReference type="BioGRID" id="34132">
    <property type="interactions" value="72"/>
</dbReference>
<dbReference type="DIP" id="DIP-1972N"/>
<dbReference type="FunCoup" id="Q02196">
    <property type="interactions" value="313"/>
</dbReference>
<dbReference type="IntAct" id="Q02196">
    <property type="interactions" value="5"/>
</dbReference>
<dbReference type="MINT" id="Q02196"/>
<dbReference type="STRING" id="4932.YKL001C"/>
<dbReference type="iPTMnet" id="Q02196"/>
<dbReference type="PaxDb" id="4932-YKL001C"/>
<dbReference type="PeptideAtlas" id="Q02196"/>
<dbReference type="EnsemblFungi" id="YKL001C_mRNA">
    <property type="protein sequence ID" value="YKL001C"/>
    <property type="gene ID" value="YKL001C"/>
</dbReference>
<dbReference type="GeneID" id="853869"/>
<dbReference type="KEGG" id="sce:YKL001C"/>
<dbReference type="AGR" id="SGD:S000001484"/>
<dbReference type="SGD" id="S000001484">
    <property type="gene designation" value="MET14"/>
</dbReference>
<dbReference type="VEuPathDB" id="FungiDB:YKL001C"/>
<dbReference type="eggNOG" id="KOG0635">
    <property type="taxonomic scope" value="Eukaryota"/>
</dbReference>
<dbReference type="GeneTree" id="ENSGT00390000009613"/>
<dbReference type="HOGENOM" id="CLU_046932_1_0_1"/>
<dbReference type="InParanoid" id="Q02196"/>
<dbReference type="OMA" id="HENTVEE"/>
<dbReference type="OrthoDB" id="506431at2759"/>
<dbReference type="BioCyc" id="MetaCyc:YKL001C-MONOMER"/>
<dbReference type="BioCyc" id="YEAST:YKL001C-MONOMER"/>
<dbReference type="Reactome" id="R-SCE-174362">
    <property type="pathway name" value="Transport and synthesis of PAPS"/>
</dbReference>
<dbReference type="UniPathway" id="UPA00140">
    <property type="reaction ID" value="UER00205"/>
</dbReference>
<dbReference type="BioGRID-ORCS" id="853869">
    <property type="hits" value="1 hit in 10 CRISPR screens"/>
</dbReference>
<dbReference type="PRO" id="PR:Q02196"/>
<dbReference type="Proteomes" id="UP000002311">
    <property type="component" value="Chromosome XI"/>
</dbReference>
<dbReference type="RNAct" id="Q02196">
    <property type="molecule type" value="protein"/>
</dbReference>
<dbReference type="GO" id="GO:0005737">
    <property type="term" value="C:cytoplasm"/>
    <property type="evidence" value="ECO:0007005"/>
    <property type="project" value="SGD"/>
</dbReference>
<dbReference type="GO" id="GO:0004020">
    <property type="term" value="F:adenylylsulfate kinase activity"/>
    <property type="evidence" value="ECO:0000314"/>
    <property type="project" value="SGD"/>
</dbReference>
<dbReference type="GO" id="GO:0005524">
    <property type="term" value="F:ATP binding"/>
    <property type="evidence" value="ECO:0007669"/>
    <property type="project" value="UniProtKB-KW"/>
</dbReference>
<dbReference type="GO" id="GO:0019344">
    <property type="term" value="P:cysteine biosynthetic process"/>
    <property type="evidence" value="ECO:0007669"/>
    <property type="project" value="UniProtKB-KW"/>
</dbReference>
<dbReference type="GO" id="GO:0070814">
    <property type="term" value="P:hydrogen sulfide biosynthetic process"/>
    <property type="evidence" value="ECO:0007669"/>
    <property type="project" value="UniProtKB-UniPathway"/>
</dbReference>
<dbReference type="GO" id="GO:0009086">
    <property type="term" value="P:methionine biosynthetic process"/>
    <property type="evidence" value="ECO:0007669"/>
    <property type="project" value="UniProtKB-KW"/>
</dbReference>
<dbReference type="GO" id="GO:0000103">
    <property type="term" value="P:sulfate assimilation"/>
    <property type="evidence" value="ECO:0000318"/>
    <property type="project" value="GO_Central"/>
</dbReference>
<dbReference type="GO" id="GO:0019379">
    <property type="term" value="P:sulfate assimilation, phosphoadenylyl sulfate reduction by phosphoadenylyl-sulfate reductase (thioredoxin)"/>
    <property type="evidence" value="ECO:0000315"/>
    <property type="project" value="SGD"/>
</dbReference>
<dbReference type="GO" id="GO:0000096">
    <property type="term" value="P:sulfur amino acid metabolic process"/>
    <property type="evidence" value="ECO:0000315"/>
    <property type="project" value="SGD"/>
</dbReference>
<dbReference type="CDD" id="cd02027">
    <property type="entry name" value="APSK"/>
    <property type="match status" value="1"/>
</dbReference>
<dbReference type="FunFam" id="3.40.50.300:FF:000212">
    <property type="entry name" value="Adenylyl-sulfate kinase"/>
    <property type="match status" value="1"/>
</dbReference>
<dbReference type="Gene3D" id="3.40.50.300">
    <property type="entry name" value="P-loop containing nucleotide triphosphate hydrolases"/>
    <property type="match status" value="1"/>
</dbReference>
<dbReference type="HAMAP" id="MF_00065">
    <property type="entry name" value="Adenylyl_sulf_kinase"/>
    <property type="match status" value="1"/>
</dbReference>
<dbReference type="InterPro" id="IPR002891">
    <property type="entry name" value="APS_kinase"/>
</dbReference>
<dbReference type="InterPro" id="IPR027417">
    <property type="entry name" value="P-loop_NTPase"/>
</dbReference>
<dbReference type="NCBIfam" id="TIGR00455">
    <property type="entry name" value="apsK"/>
    <property type="match status" value="1"/>
</dbReference>
<dbReference type="NCBIfam" id="NF003013">
    <property type="entry name" value="PRK03846.1"/>
    <property type="match status" value="1"/>
</dbReference>
<dbReference type="PANTHER" id="PTHR11055">
    <property type="entry name" value="BIFUNCTIONAL 3'-PHOSPHOADENOSINE 5'-PHOSPHOSULFATE SYNTHASE"/>
    <property type="match status" value="1"/>
</dbReference>
<dbReference type="PANTHER" id="PTHR11055:SF1">
    <property type="entry name" value="PAPS SYNTHETASE, ISOFORM D"/>
    <property type="match status" value="1"/>
</dbReference>
<dbReference type="Pfam" id="PF01583">
    <property type="entry name" value="APS_kinase"/>
    <property type="match status" value="1"/>
</dbReference>
<dbReference type="SUPFAM" id="SSF52540">
    <property type="entry name" value="P-loop containing nucleoside triphosphate hydrolases"/>
    <property type="match status" value="1"/>
</dbReference>
<proteinExistence type="evidence at protein level"/>
<organism>
    <name type="scientific">Saccharomyces cerevisiae (strain ATCC 204508 / S288c)</name>
    <name type="common">Baker's yeast</name>
    <dbReference type="NCBI Taxonomy" id="559292"/>
    <lineage>
        <taxon>Eukaryota</taxon>
        <taxon>Fungi</taxon>
        <taxon>Dikarya</taxon>
        <taxon>Ascomycota</taxon>
        <taxon>Saccharomycotina</taxon>
        <taxon>Saccharomycetes</taxon>
        <taxon>Saccharomycetales</taxon>
        <taxon>Saccharomycetaceae</taxon>
        <taxon>Saccharomyces</taxon>
    </lineage>
</organism>
<protein>
    <recommendedName>
        <fullName>Adenylyl-sulfate kinase</fullName>
        <ecNumber>2.7.1.25</ecNumber>
    </recommendedName>
    <alternativeName>
        <fullName>ATP adenosine-5'-phosphosulfate 3'-phosphotransferase</fullName>
    </alternativeName>
    <alternativeName>
        <fullName>Adenosine-5'-phosphosulfate kinase</fullName>
        <shortName>APS kinase</shortName>
    </alternativeName>
</protein>
<accession>Q02196</accession>
<accession>D6VXT6</accession>
<gene>
    <name type="primary">MET14</name>
    <name type="ordered locus">YKL001C</name>
</gene>
<reference key="1">
    <citation type="journal article" date="1991" name="Mol. Gen. Genet.">
        <title>Cloning, nucleotide sequence, and regulation of MET14, the gene encoding the APS kinase of Saccharomyces cerevisiae.</title>
        <authorList>
            <person name="Korch C."/>
            <person name="Mountain H.A."/>
            <person name="Bystroem A.S."/>
        </authorList>
    </citation>
    <scope>NUCLEOTIDE SEQUENCE [GENOMIC DNA]</scope>
    <source>
        <strain>ATCC 204510 / AB320</strain>
    </source>
</reference>
<reference key="2">
    <citation type="journal article" date="1992" name="Yeast">
        <title>DNA sequencing and analysis of a 24.7 kb segment encompassing centromere CEN11 of Saccharomyces cerevisiae reveals nine previously unknown open reading frames.</title>
        <authorList>
            <person name="Duesterhoeft A."/>
            <person name="Philippsen P."/>
        </authorList>
    </citation>
    <scope>NUCLEOTIDE SEQUENCE [GENOMIC DNA]</scope>
    <source>
        <strain>ATCC 204508 / S288c</strain>
    </source>
</reference>
<reference key="3">
    <citation type="journal article" date="1994" name="Nature">
        <title>Complete DNA sequence of yeast chromosome XI.</title>
        <authorList>
            <person name="Dujon B."/>
            <person name="Alexandraki D."/>
            <person name="Andre B."/>
            <person name="Ansorge W."/>
            <person name="Baladron V."/>
            <person name="Ballesta J.P.G."/>
            <person name="Banrevi A."/>
            <person name="Bolle P.-A."/>
            <person name="Bolotin-Fukuhara M."/>
            <person name="Bossier P."/>
            <person name="Bou G."/>
            <person name="Boyer J."/>
            <person name="Buitrago M.J."/>
            <person name="Cheret G."/>
            <person name="Colleaux L."/>
            <person name="Daignan-Fornier B."/>
            <person name="del Rey F."/>
            <person name="Dion C."/>
            <person name="Domdey H."/>
            <person name="Duesterhoeft A."/>
            <person name="Duesterhus S."/>
            <person name="Entian K.-D."/>
            <person name="Erfle H."/>
            <person name="Esteban P.F."/>
            <person name="Feldmann H."/>
            <person name="Fernandes L."/>
            <person name="Fobo G.M."/>
            <person name="Fritz C."/>
            <person name="Fukuhara H."/>
            <person name="Gabel C."/>
            <person name="Gaillon L."/>
            <person name="Garcia-Cantalejo J.M."/>
            <person name="Garcia-Ramirez J.J."/>
            <person name="Gent M.E."/>
            <person name="Ghazvini M."/>
            <person name="Goffeau A."/>
            <person name="Gonzalez A."/>
            <person name="Grothues D."/>
            <person name="Guerreiro P."/>
            <person name="Hegemann J.H."/>
            <person name="Hewitt N."/>
            <person name="Hilger F."/>
            <person name="Hollenberg C.P."/>
            <person name="Horaitis O."/>
            <person name="Indge K.J."/>
            <person name="Jacquier A."/>
            <person name="James C.M."/>
            <person name="Jauniaux J.-C."/>
            <person name="Jimenez A."/>
            <person name="Keuchel H."/>
            <person name="Kirchrath L."/>
            <person name="Kleine K."/>
            <person name="Koetter P."/>
            <person name="Legrain P."/>
            <person name="Liebl S."/>
            <person name="Louis E.J."/>
            <person name="Maia e Silva A."/>
            <person name="Marck C."/>
            <person name="Monnier A.-L."/>
            <person name="Moestl D."/>
            <person name="Mueller S."/>
            <person name="Obermaier B."/>
            <person name="Oliver S.G."/>
            <person name="Pallier C."/>
            <person name="Pascolo S."/>
            <person name="Pfeiffer F."/>
            <person name="Philippsen P."/>
            <person name="Planta R.J."/>
            <person name="Pohl F.M."/>
            <person name="Pohl T.M."/>
            <person name="Poehlmann R."/>
            <person name="Portetelle D."/>
            <person name="Purnelle B."/>
            <person name="Puzos V."/>
            <person name="Ramezani Rad M."/>
            <person name="Rasmussen S.W."/>
            <person name="Remacha M.A."/>
            <person name="Revuelta J.L."/>
            <person name="Richard G.-F."/>
            <person name="Rieger M."/>
            <person name="Rodrigues-Pousada C."/>
            <person name="Rose M."/>
            <person name="Rupp T."/>
            <person name="Santos M.A."/>
            <person name="Schwager C."/>
            <person name="Sensen C."/>
            <person name="Skala J."/>
            <person name="Soares H."/>
            <person name="Sor F."/>
            <person name="Stegemann J."/>
            <person name="Tettelin H."/>
            <person name="Thierry A."/>
            <person name="Tzermia M."/>
            <person name="Urrestarazu L.A."/>
            <person name="van Dyck L."/>
            <person name="van Vliet-Reedijk J.C."/>
            <person name="Valens M."/>
            <person name="Vandenbol M."/>
            <person name="Vilela C."/>
            <person name="Vissers S."/>
            <person name="von Wettstein D."/>
            <person name="Voss H."/>
            <person name="Wiemann S."/>
            <person name="Xu G."/>
            <person name="Zimmermann J."/>
            <person name="Haasemann M."/>
            <person name="Becker I."/>
            <person name="Mewes H.-W."/>
        </authorList>
    </citation>
    <scope>NUCLEOTIDE SEQUENCE [LARGE SCALE GENOMIC DNA]</scope>
    <source>
        <strain>ATCC 204508 / S288c</strain>
    </source>
</reference>
<reference key="4">
    <citation type="journal article" date="2014" name="G3 (Bethesda)">
        <title>The reference genome sequence of Saccharomyces cerevisiae: Then and now.</title>
        <authorList>
            <person name="Engel S.R."/>
            <person name="Dietrich F.S."/>
            <person name="Fisk D.G."/>
            <person name="Binkley G."/>
            <person name="Balakrishnan R."/>
            <person name="Costanzo M.C."/>
            <person name="Dwight S.S."/>
            <person name="Hitz B.C."/>
            <person name="Karra K."/>
            <person name="Nash R.S."/>
            <person name="Weng S."/>
            <person name="Wong E.D."/>
            <person name="Lloyd P."/>
            <person name="Skrzypek M.S."/>
            <person name="Miyasato S.R."/>
            <person name="Simison M."/>
            <person name="Cherry J.M."/>
        </authorList>
    </citation>
    <scope>GENOME REANNOTATION</scope>
    <source>
        <strain>ATCC 204508 / S288c</strain>
    </source>
</reference>
<reference key="5">
    <citation type="journal article" date="2007" name="Genome Res.">
        <title>Approaching a complete repository of sequence-verified protein-encoding clones for Saccharomyces cerevisiae.</title>
        <authorList>
            <person name="Hu Y."/>
            <person name="Rolfs A."/>
            <person name="Bhullar B."/>
            <person name="Murthy T.V.S."/>
            <person name="Zhu C."/>
            <person name="Berger M.F."/>
            <person name="Camargo A.A."/>
            <person name="Kelley F."/>
            <person name="McCarron S."/>
            <person name="Jepson D."/>
            <person name="Richardson A."/>
            <person name="Raphael J."/>
            <person name="Moreira D."/>
            <person name="Taycher E."/>
            <person name="Zuo D."/>
            <person name="Mohr S."/>
            <person name="Kane M.F."/>
            <person name="Williamson J."/>
            <person name="Simpson A.J.G."/>
            <person name="Bulyk M.L."/>
            <person name="Harlow E."/>
            <person name="Marsischky G."/>
            <person name="Kolodner R.D."/>
            <person name="LaBaer J."/>
        </authorList>
    </citation>
    <scope>NUCLEOTIDE SEQUENCE [GENOMIC DNA]</scope>
    <source>
        <strain>ATCC 204508 / S288c</strain>
    </source>
</reference>
<reference key="6">
    <citation type="journal article" date="2003" name="Nature">
        <title>Global analysis of protein expression in yeast.</title>
        <authorList>
            <person name="Ghaemmaghami S."/>
            <person name="Huh W.-K."/>
            <person name="Bower K."/>
            <person name="Howson R.W."/>
            <person name="Belle A."/>
            <person name="Dephoure N."/>
            <person name="O'Shea E.K."/>
            <person name="Weissman J.S."/>
        </authorList>
    </citation>
    <scope>LEVEL OF PROTEIN EXPRESSION [LARGE SCALE ANALYSIS]</scope>
</reference>
<feature type="chain" id="PRO_0000105936" description="Adenylyl-sulfate kinase">
    <location>
        <begin position="1"/>
        <end position="202"/>
    </location>
</feature>
<feature type="active site" description="Phosphoserine intermediate" evidence="1">
    <location>
        <position position="105"/>
    </location>
</feature>
<feature type="binding site" evidence="1">
    <location>
        <begin position="31"/>
        <end position="38"/>
    </location>
    <ligand>
        <name>ATP</name>
        <dbReference type="ChEBI" id="CHEBI:30616"/>
    </ligand>
</feature>
<evidence type="ECO:0000250" key="1"/>
<evidence type="ECO:0000269" key="2">
    <source>
    </source>
</evidence>
<evidence type="ECO:0000305" key="3"/>
<sequence>MATNITWHPNLTYDERKALRKQDGCTIWLTGLSASGKSTIACALEQLLLQKNLSAYRLDGDNIRFGLNKDLGFSEKDRNENIRRISEVSKLFADSCAISITSFISPYRVDRDRARELHKEAGLKFIEIFVDVPLEVAEQRDPKGLYKKAREGVIKEFTGISAPYEAPKAPELHLRTDQKTVEECATIIYEYLISEKIIRKHL</sequence>
<name>KAPS_YEAST</name>
<keyword id="KW-0028">Amino-acid biosynthesis</keyword>
<keyword id="KW-0067">ATP-binding</keyword>
<keyword id="KW-0198">Cysteine biosynthesis</keyword>
<keyword id="KW-0418">Kinase</keyword>
<keyword id="KW-0486">Methionine biosynthesis</keyword>
<keyword id="KW-0547">Nucleotide-binding</keyword>
<keyword id="KW-1185">Reference proteome</keyword>
<keyword id="KW-0808">Transferase</keyword>